<dbReference type="EMBL" id="AP009384">
    <property type="protein sequence ID" value="BAF88534.1"/>
    <property type="molecule type" value="Genomic_DNA"/>
</dbReference>
<dbReference type="RefSeq" id="WP_012171062.1">
    <property type="nucleotide sequence ID" value="NC_009937.1"/>
</dbReference>
<dbReference type="SMR" id="A8IAP5"/>
<dbReference type="STRING" id="438753.AZC_2536"/>
<dbReference type="KEGG" id="azc:AZC_2536"/>
<dbReference type="eggNOG" id="COG1841">
    <property type="taxonomic scope" value="Bacteria"/>
</dbReference>
<dbReference type="HOGENOM" id="CLU_131047_1_2_5"/>
<dbReference type="Proteomes" id="UP000000270">
    <property type="component" value="Chromosome"/>
</dbReference>
<dbReference type="GO" id="GO:0022625">
    <property type="term" value="C:cytosolic large ribosomal subunit"/>
    <property type="evidence" value="ECO:0007669"/>
    <property type="project" value="TreeGrafter"/>
</dbReference>
<dbReference type="GO" id="GO:0003735">
    <property type="term" value="F:structural constituent of ribosome"/>
    <property type="evidence" value="ECO:0007669"/>
    <property type="project" value="InterPro"/>
</dbReference>
<dbReference type="GO" id="GO:0006412">
    <property type="term" value="P:translation"/>
    <property type="evidence" value="ECO:0007669"/>
    <property type="project" value="UniProtKB-UniRule"/>
</dbReference>
<dbReference type="CDD" id="cd01658">
    <property type="entry name" value="Ribosomal_L30"/>
    <property type="match status" value="1"/>
</dbReference>
<dbReference type="Gene3D" id="3.30.1390.20">
    <property type="entry name" value="Ribosomal protein L30, ferredoxin-like fold domain"/>
    <property type="match status" value="1"/>
</dbReference>
<dbReference type="HAMAP" id="MF_01371_B">
    <property type="entry name" value="Ribosomal_uL30_B"/>
    <property type="match status" value="1"/>
</dbReference>
<dbReference type="InterPro" id="IPR036919">
    <property type="entry name" value="Ribo_uL30_ferredoxin-like_sf"/>
</dbReference>
<dbReference type="InterPro" id="IPR005996">
    <property type="entry name" value="Ribosomal_uL30_bac-type"/>
</dbReference>
<dbReference type="InterPro" id="IPR016082">
    <property type="entry name" value="Ribosomal_uL30_ferredoxin-like"/>
</dbReference>
<dbReference type="NCBIfam" id="TIGR01308">
    <property type="entry name" value="rpmD_bact"/>
    <property type="match status" value="1"/>
</dbReference>
<dbReference type="PANTHER" id="PTHR15892:SF2">
    <property type="entry name" value="LARGE RIBOSOMAL SUBUNIT PROTEIN UL30M"/>
    <property type="match status" value="1"/>
</dbReference>
<dbReference type="PANTHER" id="PTHR15892">
    <property type="entry name" value="MITOCHONDRIAL RIBOSOMAL PROTEIN L30"/>
    <property type="match status" value="1"/>
</dbReference>
<dbReference type="Pfam" id="PF00327">
    <property type="entry name" value="Ribosomal_L30"/>
    <property type="match status" value="1"/>
</dbReference>
<dbReference type="PIRSF" id="PIRSF002211">
    <property type="entry name" value="Ribosomal_L30_bac-type"/>
    <property type="match status" value="1"/>
</dbReference>
<dbReference type="SUPFAM" id="SSF55129">
    <property type="entry name" value="Ribosomal protein L30p/L7e"/>
    <property type="match status" value="1"/>
</dbReference>
<gene>
    <name evidence="1" type="primary">rpmD</name>
    <name type="ordered locus">AZC_2536</name>
</gene>
<sequence length="66" mass="7245">MAKASETKTVTVEQIGSPIRRPGDQRATLVGLGLNKRHRRSTLQDTPAVRGMIAKVQHLVRVVADE</sequence>
<accession>A8IAP5</accession>
<feature type="chain" id="PRO_0000347077" description="Large ribosomal subunit protein uL30">
    <location>
        <begin position="1"/>
        <end position="66"/>
    </location>
</feature>
<proteinExistence type="inferred from homology"/>
<name>RL30_AZOC5</name>
<protein>
    <recommendedName>
        <fullName evidence="1">Large ribosomal subunit protein uL30</fullName>
    </recommendedName>
    <alternativeName>
        <fullName evidence="2">50S ribosomal protein L30</fullName>
    </alternativeName>
</protein>
<comment type="subunit">
    <text evidence="1">Part of the 50S ribosomal subunit.</text>
</comment>
<comment type="similarity">
    <text evidence="1">Belongs to the universal ribosomal protein uL30 family.</text>
</comment>
<reference key="1">
    <citation type="submission" date="2007-04" db="EMBL/GenBank/DDBJ databases">
        <title>Complete genome sequence of the nitrogen-fixing bacterium Azorhizobium caulinodans ORS571.</title>
        <authorList>
            <person name="Lee K.B."/>
            <person name="Backer P.D."/>
            <person name="Aono T."/>
            <person name="Liu C.T."/>
            <person name="Suzuki S."/>
            <person name="Suzuki T."/>
            <person name="Kaneko T."/>
            <person name="Yamada M."/>
            <person name="Tabata S."/>
            <person name="Kupfer D.M."/>
            <person name="Najar F.Z."/>
            <person name="Wiley G.B."/>
            <person name="Roe B."/>
            <person name="Binnewies T."/>
            <person name="Ussery D."/>
            <person name="Vereecke D."/>
            <person name="Gevers D."/>
            <person name="Holsters M."/>
            <person name="Oyaizu H."/>
        </authorList>
    </citation>
    <scope>NUCLEOTIDE SEQUENCE [LARGE SCALE GENOMIC DNA]</scope>
    <source>
        <strain>ATCC 43989 / DSM 5975 / JCM 20966 / LMG 6465 / NBRC 14845 / NCIMB 13405 / ORS 571</strain>
    </source>
</reference>
<organism>
    <name type="scientific">Azorhizobium caulinodans (strain ATCC 43989 / DSM 5975 / JCM 20966 / LMG 6465 / NBRC 14845 / NCIMB 13405 / ORS 571)</name>
    <dbReference type="NCBI Taxonomy" id="438753"/>
    <lineage>
        <taxon>Bacteria</taxon>
        <taxon>Pseudomonadati</taxon>
        <taxon>Pseudomonadota</taxon>
        <taxon>Alphaproteobacteria</taxon>
        <taxon>Hyphomicrobiales</taxon>
        <taxon>Xanthobacteraceae</taxon>
        <taxon>Azorhizobium</taxon>
    </lineage>
</organism>
<keyword id="KW-1185">Reference proteome</keyword>
<keyword id="KW-0687">Ribonucleoprotein</keyword>
<keyword id="KW-0689">Ribosomal protein</keyword>
<evidence type="ECO:0000255" key="1">
    <source>
        <dbReference type="HAMAP-Rule" id="MF_01371"/>
    </source>
</evidence>
<evidence type="ECO:0000305" key="2"/>